<keyword id="KW-0472">Membrane</keyword>
<keyword id="KW-0812">Transmembrane</keyword>
<keyword id="KW-1133">Transmembrane helix</keyword>
<evidence type="ECO:0000255" key="1"/>
<evidence type="ECO:0000305" key="2"/>
<reference key="1">
    <citation type="journal article" date="2007" name="Proc. Natl. Acad. Sci. U.S.A.">
        <title>Genome sequencing and comparative analysis of Saccharomyces cerevisiae strain YJM789.</title>
        <authorList>
            <person name="Wei W."/>
            <person name="McCusker J.H."/>
            <person name="Hyman R.W."/>
            <person name="Jones T."/>
            <person name="Ning Y."/>
            <person name="Cao Z."/>
            <person name="Gu Z."/>
            <person name="Bruno D."/>
            <person name="Miranda M."/>
            <person name="Nguyen M."/>
            <person name="Wilhelmy J."/>
            <person name="Komp C."/>
            <person name="Tamse R."/>
            <person name="Wang X."/>
            <person name="Jia P."/>
            <person name="Luedi P."/>
            <person name="Oefner P.J."/>
            <person name="David L."/>
            <person name="Dietrich F.S."/>
            <person name="Li Y."/>
            <person name="Davis R.W."/>
            <person name="Steinmetz L.M."/>
        </authorList>
    </citation>
    <scope>NUCLEOTIDE SEQUENCE [LARGE SCALE GENOMIC DNA]</scope>
    <source>
        <strain>YJM789</strain>
    </source>
</reference>
<comment type="subcellular location">
    <subcellularLocation>
        <location evidence="2">Membrane</location>
        <topology evidence="2">Multi-pass membrane protein</topology>
    </subcellularLocation>
</comment>
<comment type="similarity">
    <text evidence="2">Belongs to the TPT transporter family. SLC35D subfamily.</text>
</comment>
<comment type="caution">
    <text evidence="2">This is a truncated version of GDP-mannose transporter 2. This strain has a stop codon in position 73, which disrupts the gene coding for this protein and produces two ORFs. A contiguous sequence for GDP-mannose transporter 2 can be found in strain Lalvin EC1118 (AC C8Z742).</text>
</comment>
<feature type="chain" id="PRO_0000391668" description="Uncharacterized protein SCY_1535">
    <location>
        <begin position="1"/>
        <end position="72"/>
    </location>
</feature>
<feature type="topological domain" description="Cytoplasmic" evidence="1">
    <location>
        <begin position="1"/>
        <end position="12"/>
    </location>
</feature>
<feature type="transmembrane region" description="Helical" evidence="1">
    <location>
        <begin position="13"/>
        <end position="32"/>
    </location>
</feature>
<feature type="topological domain" description="Lumenal" evidence="1">
    <location>
        <begin position="33"/>
        <end position="46"/>
    </location>
</feature>
<feature type="transmembrane region" description="Helical" evidence="1">
    <location>
        <begin position="47"/>
        <end position="69"/>
    </location>
</feature>
<feature type="topological domain" description="Cytoplasmic" evidence="1">
    <location>
        <begin position="70"/>
        <end position="72"/>
    </location>
</feature>
<proteinExistence type="inferred from homology"/>
<organism>
    <name type="scientific">Saccharomyces cerevisiae (strain YJM789)</name>
    <name type="common">Baker's yeast</name>
    <dbReference type="NCBI Taxonomy" id="307796"/>
    <lineage>
        <taxon>Eukaryota</taxon>
        <taxon>Fungi</taxon>
        <taxon>Dikarya</taxon>
        <taxon>Ascomycota</taxon>
        <taxon>Saccharomycotina</taxon>
        <taxon>Saccharomycetes</taxon>
        <taxon>Saccharomycetales</taxon>
        <taxon>Saccharomycetaceae</taxon>
        <taxon>Saccharomyces</taxon>
    </lineage>
</organism>
<name>YR039_YEAS7</name>
<dbReference type="EMBL" id="AAFW02000048">
    <property type="protein sequence ID" value="EDN63008.1"/>
    <property type="molecule type" value="Genomic_DNA"/>
</dbReference>
<dbReference type="SMR" id="A6ZQY8"/>
<dbReference type="HOGENOM" id="CLU_2723613_0_0_1"/>
<dbReference type="Proteomes" id="UP000007060">
    <property type="component" value="Unassembled WGS sequence"/>
</dbReference>
<dbReference type="GO" id="GO:0016020">
    <property type="term" value="C:membrane"/>
    <property type="evidence" value="ECO:0007669"/>
    <property type="project" value="UniProtKB-SubCell"/>
</dbReference>
<accession>A6ZQY8</accession>
<gene>
    <name type="ORF">SCY_1535</name>
</gene>
<protein>
    <recommendedName>
        <fullName>Uncharacterized protein SCY_1535</fullName>
    </recommendedName>
</protein>
<sequence length="72" mass="7986">MSKHKHEWTESVANSGPASILSYCASSILMTVTNKFVVNLDNFNMNFVMLFVQSLVCTVTLCILRIVGVANF</sequence>